<organism>
    <name type="scientific">Ehrlichia chaffeensis (strain ATCC CRL-10679 / Arkansas)</name>
    <dbReference type="NCBI Taxonomy" id="205920"/>
    <lineage>
        <taxon>Bacteria</taxon>
        <taxon>Pseudomonadati</taxon>
        <taxon>Pseudomonadota</taxon>
        <taxon>Alphaproteobacteria</taxon>
        <taxon>Rickettsiales</taxon>
        <taxon>Anaplasmataceae</taxon>
        <taxon>Ehrlichia</taxon>
    </lineage>
</organism>
<comment type="function">
    <text evidence="1">Nucleotidase that shows phosphatase activity on nucleoside 5'-monophosphates.</text>
</comment>
<comment type="catalytic activity">
    <reaction evidence="1">
        <text>a ribonucleoside 5'-phosphate + H2O = a ribonucleoside + phosphate</text>
        <dbReference type="Rhea" id="RHEA:12484"/>
        <dbReference type="ChEBI" id="CHEBI:15377"/>
        <dbReference type="ChEBI" id="CHEBI:18254"/>
        <dbReference type="ChEBI" id="CHEBI:43474"/>
        <dbReference type="ChEBI" id="CHEBI:58043"/>
        <dbReference type="EC" id="3.1.3.5"/>
    </reaction>
</comment>
<comment type="cofactor">
    <cofactor evidence="1">
        <name>a divalent metal cation</name>
        <dbReference type="ChEBI" id="CHEBI:60240"/>
    </cofactor>
    <text evidence="1">Binds 1 divalent metal cation per subunit.</text>
</comment>
<comment type="subcellular location">
    <subcellularLocation>
        <location evidence="1">Cytoplasm</location>
    </subcellularLocation>
</comment>
<comment type="similarity">
    <text evidence="1">Belongs to the SurE nucleotidase family.</text>
</comment>
<keyword id="KW-0963">Cytoplasm</keyword>
<keyword id="KW-0378">Hydrolase</keyword>
<keyword id="KW-0479">Metal-binding</keyword>
<keyword id="KW-0547">Nucleotide-binding</keyword>
<keyword id="KW-1185">Reference proteome</keyword>
<gene>
    <name evidence="1" type="primary">surE</name>
    <name type="ordered locus">ECH_0791</name>
</gene>
<accession>Q2GG44</accession>
<evidence type="ECO:0000255" key="1">
    <source>
        <dbReference type="HAMAP-Rule" id="MF_00060"/>
    </source>
</evidence>
<name>SURE_EHRCR</name>
<feature type="chain" id="PRO_1000007729" description="5'-nucleotidase SurE">
    <location>
        <begin position="1"/>
        <end position="256"/>
    </location>
</feature>
<feature type="binding site" evidence="1">
    <location>
        <position position="8"/>
    </location>
    <ligand>
        <name>a divalent metal cation</name>
        <dbReference type="ChEBI" id="CHEBI:60240"/>
    </ligand>
</feature>
<feature type="binding site" evidence="1">
    <location>
        <position position="9"/>
    </location>
    <ligand>
        <name>a divalent metal cation</name>
        <dbReference type="ChEBI" id="CHEBI:60240"/>
    </ligand>
</feature>
<feature type="binding site" evidence="1">
    <location>
        <position position="42"/>
    </location>
    <ligand>
        <name>a divalent metal cation</name>
        <dbReference type="ChEBI" id="CHEBI:60240"/>
    </ligand>
</feature>
<feature type="binding site" evidence="1">
    <location>
        <position position="94"/>
    </location>
    <ligand>
        <name>a divalent metal cation</name>
        <dbReference type="ChEBI" id="CHEBI:60240"/>
    </ligand>
</feature>
<dbReference type="EC" id="3.1.3.5" evidence="1"/>
<dbReference type="EMBL" id="CP000236">
    <property type="protein sequence ID" value="ABD44876.1"/>
    <property type="molecule type" value="Genomic_DNA"/>
</dbReference>
<dbReference type="RefSeq" id="WP_011452815.1">
    <property type="nucleotide sequence ID" value="NC_007799.1"/>
</dbReference>
<dbReference type="SMR" id="Q2GG44"/>
<dbReference type="STRING" id="205920.ECH_0791"/>
<dbReference type="KEGG" id="ech:ECH_0791"/>
<dbReference type="eggNOG" id="COG0496">
    <property type="taxonomic scope" value="Bacteria"/>
</dbReference>
<dbReference type="HOGENOM" id="CLU_045192_1_2_5"/>
<dbReference type="OrthoDB" id="9780815at2"/>
<dbReference type="Proteomes" id="UP000008320">
    <property type="component" value="Chromosome"/>
</dbReference>
<dbReference type="GO" id="GO:0005737">
    <property type="term" value="C:cytoplasm"/>
    <property type="evidence" value="ECO:0007669"/>
    <property type="project" value="UniProtKB-SubCell"/>
</dbReference>
<dbReference type="GO" id="GO:0008254">
    <property type="term" value="F:3'-nucleotidase activity"/>
    <property type="evidence" value="ECO:0007669"/>
    <property type="project" value="TreeGrafter"/>
</dbReference>
<dbReference type="GO" id="GO:0008253">
    <property type="term" value="F:5'-nucleotidase activity"/>
    <property type="evidence" value="ECO:0007669"/>
    <property type="project" value="UniProtKB-UniRule"/>
</dbReference>
<dbReference type="GO" id="GO:0004309">
    <property type="term" value="F:exopolyphosphatase activity"/>
    <property type="evidence" value="ECO:0007669"/>
    <property type="project" value="TreeGrafter"/>
</dbReference>
<dbReference type="GO" id="GO:0046872">
    <property type="term" value="F:metal ion binding"/>
    <property type="evidence" value="ECO:0007669"/>
    <property type="project" value="UniProtKB-UniRule"/>
</dbReference>
<dbReference type="GO" id="GO:0000166">
    <property type="term" value="F:nucleotide binding"/>
    <property type="evidence" value="ECO:0007669"/>
    <property type="project" value="UniProtKB-KW"/>
</dbReference>
<dbReference type="Gene3D" id="3.40.1210.10">
    <property type="entry name" value="Survival protein SurE-like phosphatase/nucleotidase"/>
    <property type="match status" value="1"/>
</dbReference>
<dbReference type="HAMAP" id="MF_00060">
    <property type="entry name" value="SurE"/>
    <property type="match status" value="1"/>
</dbReference>
<dbReference type="InterPro" id="IPR030048">
    <property type="entry name" value="SurE"/>
</dbReference>
<dbReference type="InterPro" id="IPR002828">
    <property type="entry name" value="SurE-like_Pase/nucleotidase"/>
</dbReference>
<dbReference type="InterPro" id="IPR036523">
    <property type="entry name" value="SurE-like_sf"/>
</dbReference>
<dbReference type="NCBIfam" id="TIGR00087">
    <property type="entry name" value="surE"/>
    <property type="match status" value="1"/>
</dbReference>
<dbReference type="PANTHER" id="PTHR30457">
    <property type="entry name" value="5'-NUCLEOTIDASE SURE"/>
    <property type="match status" value="1"/>
</dbReference>
<dbReference type="PANTHER" id="PTHR30457:SF12">
    <property type="entry name" value="5'_3'-NUCLEOTIDASE SURE"/>
    <property type="match status" value="1"/>
</dbReference>
<dbReference type="Pfam" id="PF01975">
    <property type="entry name" value="SurE"/>
    <property type="match status" value="1"/>
</dbReference>
<dbReference type="SUPFAM" id="SSF64167">
    <property type="entry name" value="SurE-like"/>
    <property type="match status" value="1"/>
</dbReference>
<proteinExistence type="inferred from homology"/>
<protein>
    <recommendedName>
        <fullName evidence="1">5'-nucleotidase SurE</fullName>
        <ecNumber evidence="1">3.1.3.5</ecNumber>
    </recommendedName>
    <alternativeName>
        <fullName evidence="1">Nucleoside 5'-monophosphate phosphohydrolase</fullName>
    </alternativeName>
</protein>
<sequence>MKVLLTNDDGFHANGIKVLKEIVMAAGIASEIWVVAPLSNCSGCGRSVGLRHAIEVYKVSDTEFIVNSTPSTTMFLGLKEIVGEKPDLVLSGINSGVNIGNDVTYSGTIAAAAEAAMMSIPSIAISQEYDGRSGEINWENPRKFLKGIVDMLLGAPSWDKSTVMSVNFPLISAKGIKFTSQGKYMPYNKIEKKKNAASSISYTIHRTAPDKDSRGESDDSIRALDDGYVTITPLKFDMTDFDILESLMLLNEGCNI</sequence>
<reference key="1">
    <citation type="journal article" date="2006" name="PLoS Genet.">
        <title>Comparative genomics of emerging human ehrlichiosis agents.</title>
        <authorList>
            <person name="Dunning Hotopp J.C."/>
            <person name="Lin M."/>
            <person name="Madupu R."/>
            <person name="Crabtree J."/>
            <person name="Angiuoli S.V."/>
            <person name="Eisen J.A."/>
            <person name="Seshadri R."/>
            <person name="Ren Q."/>
            <person name="Wu M."/>
            <person name="Utterback T.R."/>
            <person name="Smith S."/>
            <person name="Lewis M."/>
            <person name="Khouri H."/>
            <person name="Zhang C."/>
            <person name="Niu H."/>
            <person name="Lin Q."/>
            <person name="Ohashi N."/>
            <person name="Zhi N."/>
            <person name="Nelson W.C."/>
            <person name="Brinkac L.M."/>
            <person name="Dodson R.J."/>
            <person name="Rosovitz M.J."/>
            <person name="Sundaram J.P."/>
            <person name="Daugherty S.C."/>
            <person name="Davidsen T."/>
            <person name="Durkin A.S."/>
            <person name="Gwinn M.L."/>
            <person name="Haft D.H."/>
            <person name="Selengut J.D."/>
            <person name="Sullivan S.A."/>
            <person name="Zafar N."/>
            <person name="Zhou L."/>
            <person name="Benahmed F."/>
            <person name="Forberger H."/>
            <person name="Halpin R."/>
            <person name="Mulligan S."/>
            <person name="Robinson J."/>
            <person name="White O."/>
            <person name="Rikihisa Y."/>
            <person name="Tettelin H."/>
        </authorList>
    </citation>
    <scope>NUCLEOTIDE SEQUENCE [LARGE SCALE GENOMIC DNA]</scope>
    <source>
        <strain>ATCC CRL-10679 / Arkansas</strain>
    </source>
</reference>